<comment type="function">
    <text evidence="1">Involved in cell wall peptidoglycan recycling. Specifically cleaves the amide bond between the lactyl group of N-acetylmuramic acid and the alpha-amino group of the L-alanine in degradation products containing an anhydro N-acetylmuramyl moiety.</text>
</comment>
<comment type="catalytic activity">
    <reaction evidence="1">
        <text>Hydrolyzes the link between N-acetylmuramoyl residues and L-amino acid residues in certain cell-wall glycopeptides.</text>
        <dbReference type="EC" id="3.5.1.28"/>
    </reaction>
</comment>
<comment type="cofactor">
    <cofactor evidence="3">
        <name>Zn(2+)</name>
        <dbReference type="ChEBI" id="CHEBI:29105"/>
    </cofactor>
    <text evidence="3">Zn(2+) is required for amidase activity.</text>
</comment>
<comment type="subcellular location">
    <subcellularLocation>
        <location evidence="1">Cytoplasm</location>
    </subcellularLocation>
</comment>
<comment type="similarity">
    <text evidence="5">Belongs to the N-acetylmuramoyl-L-alanine amidase 2 family.</text>
</comment>
<name>AMPD_HAEIN</name>
<sequence length="184" mass="21448">MRKIKDIEKGLLTDCRQIQSPHFDKRPNPQDISLLVIHYISLPPEQFGGGYVDDFFQGKLDPKIHPYFAEIYQMRVSAHCLIERNGRITQYVNFNDRAWHAGVSNFQGREKCNDFAIGIELEGSNEQPFTDAQYFSLQELTNVIMKSYPKITKDRIVGHCDISPKRKIDPGQYFDWERYLSSVK</sequence>
<proteinExistence type="inferred from homology"/>
<feature type="chain" id="PRO_0000164414" description="1,6-anhydro-N-acetylmuramyl-L-alanine amidase AmpD">
    <location>
        <begin position="1"/>
        <end position="184"/>
    </location>
</feature>
<feature type="domain" description="N-acetylmuramoyl-L-alanine amidase" evidence="4">
    <location>
        <begin position="30"/>
        <end position="171"/>
    </location>
</feature>
<feature type="active site" description="Proton acceptor" evidence="2">
    <location>
        <position position="120"/>
    </location>
</feature>
<feature type="binding site" evidence="3">
    <location>
        <position position="38"/>
    </location>
    <ligand>
        <name>Zn(2+)</name>
        <dbReference type="ChEBI" id="CHEBI:29105"/>
        <note>catalytic</note>
    </ligand>
</feature>
<feature type="binding site" evidence="3">
    <location>
        <position position="159"/>
    </location>
    <ligand>
        <name>Zn(2+)</name>
        <dbReference type="ChEBI" id="CHEBI:29105"/>
        <note>catalytic</note>
    </ligand>
</feature>
<feature type="binding site" evidence="3">
    <location>
        <position position="169"/>
    </location>
    <ligand>
        <name>Zn(2+)</name>
        <dbReference type="ChEBI" id="CHEBI:29105"/>
        <note>catalytic</note>
    </ligand>
</feature>
<feature type="site" description="Transition state stabilizer" evidence="2">
    <location>
        <position position="167"/>
    </location>
</feature>
<gene>
    <name type="primary">ampD</name>
    <name type="ordered locus">HI_0300</name>
</gene>
<organism>
    <name type="scientific">Haemophilus influenzae (strain ATCC 51907 / DSM 11121 / KW20 / Rd)</name>
    <dbReference type="NCBI Taxonomy" id="71421"/>
    <lineage>
        <taxon>Bacteria</taxon>
        <taxon>Pseudomonadati</taxon>
        <taxon>Pseudomonadota</taxon>
        <taxon>Gammaproteobacteria</taxon>
        <taxon>Pasteurellales</taxon>
        <taxon>Pasteurellaceae</taxon>
        <taxon>Haemophilus</taxon>
    </lineage>
</organism>
<keyword id="KW-0961">Cell wall biogenesis/degradation</keyword>
<keyword id="KW-0963">Cytoplasm</keyword>
<keyword id="KW-0378">Hydrolase</keyword>
<keyword id="KW-0479">Metal-binding</keyword>
<keyword id="KW-1185">Reference proteome</keyword>
<keyword id="KW-0862">Zinc</keyword>
<reference key="1">
    <citation type="journal article" date="1995" name="Science">
        <title>Whole-genome random sequencing and assembly of Haemophilus influenzae Rd.</title>
        <authorList>
            <person name="Fleischmann R.D."/>
            <person name="Adams M.D."/>
            <person name="White O."/>
            <person name="Clayton R.A."/>
            <person name="Kirkness E.F."/>
            <person name="Kerlavage A.R."/>
            <person name="Bult C.J."/>
            <person name="Tomb J.-F."/>
            <person name="Dougherty B.A."/>
            <person name="Merrick J.M."/>
            <person name="McKenney K."/>
            <person name="Sutton G.G."/>
            <person name="FitzHugh W."/>
            <person name="Fields C.A."/>
            <person name="Gocayne J.D."/>
            <person name="Scott J.D."/>
            <person name="Shirley R."/>
            <person name="Liu L.-I."/>
            <person name="Glodek A."/>
            <person name="Kelley J.M."/>
            <person name="Weidman J.F."/>
            <person name="Phillips C.A."/>
            <person name="Spriggs T."/>
            <person name="Hedblom E."/>
            <person name="Cotton M.D."/>
            <person name="Utterback T.R."/>
            <person name="Hanna M.C."/>
            <person name="Nguyen D.T."/>
            <person name="Saudek D.M."/>
            <person name="Brandon R.C."/>
            <person name="Fine L.D."/>
            <person name="Fritchman J.L."/>
            <person name="Fuhrmann J.L."/>
            <person name="Geoghagen N.S.M."/>
            <person name="Gnehm C.L."/>
            <person name="McDonald L.A."/>
            <person name="Small K.V."/>
            <person name="Fraser C.M."/>
            <person name="Smith H.O."/>
            <person name="Venter J.C."/>
        </authorList>
    </citation>
    <scope>NUCLEOTIDE SEQUENCE [LARGE SCALE GENOMIC DNA]</scope>
    <source>
        <strain>ATCC 51907 / DSM 11121 / KW20 / Rd</strain>
    </source>
</reference>
<protein>
    <recommendedName>
        <fullName evidence="1">1,6-anhydro-N-acetylmuramyl-L-alanine amidase AmpD</fullName>
        <ecNumber evidence="1">3.5.1.28</ecNumber>
    </recommendedName>
    <alternativeName>
        <fullName evidence="1">N-acetylmuramoyl-L-alanine amidase</fullName>
    </alternativeName>
</protein>
<dbReference type="EC" id="3.5.1.28" evidence="1"/>
<dbReference type="EMBL" id="L42023">
    <property type="protein sequence ID" value="AAC21965.1"/>
    <property type="molecule type" value="Genomic_DNA"/>
</dbReference>
<dbReference type="PIR" id="F64060">
    <property type="entry name" value="F64060"/>
</dbReference>
<dbReference type="RefSeq" id="NP_438467.1">
    <property type="nucleotide sequence ID" value="NC_000907.1"/>
</dbReference>
<dbReference type="SMR" id="P44624"/>
<dbReference type="STRING" id="71421.HI_0300"/>
<dbReference type="EnsemblBacteria" id="AAC21965">
    <property type="protein sequence ID" value="AAC21965"/>
    <property type="gene ID" value="HI_0300"/>
</dbReference>
<dbReference type="KEGG" id="hin:HI_0300"/>
<dbReference type="PATRIC" id="fig|71421.8.peg.317"/>
<dbReference type="eggNOG" id="COG3023">
    <property type="taxonomic scope" value="Bacteria"/>
</dbReference>
<dbReference type="HOGENOM" id="CLU_049290_1_0_6"/>
<dbReference type="OrthoDB" id="9794842at2"/>
<dbReference type="PhylomeDB" id="P44624"/>
<dbReference type="BioCyc" id="HINF71421:G1GJ1-318-MONOMER"/>
<dbReference type="Proteomes" id="UP000000579">
    <property type="component" value="Chromosome"/>
</dbReference>
<dbReference type="GO" id="GO:0005737">
    <property type="term" value="C:cytoplasm"/>
    <property type="evidence" value="ECO:0007669"/>
    <property type="project" value="UniProtKB-SubCell"/>
</dbReference>
<dbReference type="GO" id="GO:0046872">
    <property type="term" value="F:metal ion binding"/>
    <property type="evidence" value="ECO:0007669"/>
    <property type="project" value="UniProtKB-KW"/>
</dbReference>
<dbReference type="GO" id="GO:0008745">
    <property type="term" value="F:N-acetylmuramoyl-L-alanine amidase activity"/>
    <property type="evidence" value="ECO:0000318"/>
    <property type="project" value="GO_Central"/>
</dbReference>
<dbReference type="GO" id="GO:0071555">
    <property type="term" value="P:cell wall organization"/>
    <property type="evidence" value="ECO:0007669"/>
    <property type="project" value="UniProtKB-KW"/>
</dbReference>
<dbReference type="GO" id="GO:0009253">
    <property type="term" value="P:peptidoglycan catabolic process"/>
    <property type="evidence" value="ECO:0000318"/>
    <property type="project" value="GO_Central"/>
</dbReference>
<dbReference type="GO" id="GO:0009254">
    <property type="term" value="P:peptidoglycan turnover"/>
    <property type="evidence" value="ECO:0000318"/>
    <property type="project" value="GO_Central"/>
</dbReference>
<dbReference type="CDD" id="cd06583">
    <property type="entry name" value="PGRP"/>
    <property type="match status" value="1"/>
</dbReference>
<dbReference type="FunFam" id="3.40.80.10:FF:000002">
    <property type="entry name" value="1,6-anhydro-N-acetylmuramyl-L-alanine amidase"/>
    <property type="match status" value="1"/>
</dbReference>
<dbReference type="Gene3D" id="3.40.80.10">
    <property type="entry name" value="Peptidoglycan recognition protein-like"/>
    <property type="match status" value="1"/>
</dbReference>
<dbReference type="InterPro" id="IPR036505">
    <property type="entry name" value="Amidase/PGRP_sf"/>
</dbReference>
<dbReference type="InterPro" id="IPR002502">
    <property type="entry name" value="Amidase_domain"/>
</dbReference>
<dbReference type="InterPro" id="IPR051206">
    <property type="entry name" value="NAMLAA_amidase_2"/>
</dbReference>
<dbReference type="NCBIfam" id="NF008758">
    <property type="entry name" value="PRK11789.1"/>
    <property type="match status" value="1"/>
</dbReference>
<dbReference type="PANTHER" id="PTHR30417:SF4">
    <property type="entry name" value="1,6-ANHYDRO-N-ACETYLMURAMYL-L-ALANINE AMIDASE AMPD"/>
    <property type="match status" value="1"/>
</dbReference>
<dbReference type="PANTHER" id="PTHR30417">
    <property type="entry name" value="N-ACETYLMURAMOYL-L-ALANINE AMIDASE AMID"/>
    <property type="match status" value="1"/>
</dbReference>
<dbReference type="Pfam" id="PF01510">
    <property type="entry name" value="Amidase_2"/>
    <property type="match status" value="1"/>
</dbReference>
<dbReference type="SMART" id="SM00644">
    <property type="entry name" value="Ami_2"/>
    <property type="match status" value="1"/>
</dbReference>
<dbReference type="SUPFAM" id="SSF55846">
    <property type="entry name" value="N-acetylmuramoyl-L-alanine amidase-like"/>
    <property type="match status" value="1"/>
</dbReference>
<accession>P44624</accession>
<evidence type="ECO:0000250" key="1">
    <source>
        <dbReference type="UniProtKB" id="P13016"/>
    </source>
</evidence>
<evidence type="ECO:0000250" key="2">
    <source>
        <dbReference type="UniProtKB" id="P75820"/>
    </source>
</evidence>
<evidence type="ECO:0000250" key="3">
    <source>
        <dbReference type="UniProtKB" id="P82974"/>
    </source>
</evidence>
<evidence type="ECO:0000255" key="4"/>
<evidence type="ECO:0000305" key="5"/>